<sequence>MIKLTARQQQVFDLIRRAIERSGFPPTRAEIAAELGFSSPNAAEEHLRALARKGVIELAAGASRGIRLLGIDDAPHQLTLPHAALMQLSLPLVGRVAAGSPILAQEHISQHYACDPALFSSKPDYLLKVRGLSMRDAGILDGDLLAVQKRTEAKDGQIIVARLGDDVTVKRLKRRPGGVELIAENPDYENIFVKAGSAEFALEGIAVGLIRPGEF</sequence>
<feature type="chain" id="PRO_1000001271" description="LexA repressor">
    <location>
        <begin position="1"/>
        <end position="215"/>
    </location>
</feature>
<feature type="DNA-binding region" description="H-T-H motif" evidence="1">
    <location>
        <begin position="28"/>
        <end position="48"/>
    </location>
</feature>
<feature type="active site" description="For autocatalytic cleavage activity" evidence="1">
    <location>
        <position position="133"/>
    </location>
</feature>
<feature type="active site" description="For autocatalytic cleavage activity" evidence="1">
    <location>
        <position position="170"/>
    </location>
</feature>
<feature type="site" description="Cleavage; by autolysis" evidence="1">
    <location>
        <begin position="98"/>
        <end position="99"/>
    </location>
</feature>
<protein>
    <recommendedName>
        <fullName evidence="1">LexA repressor</fullName>
        <ecNumber evidence="1">3.4.21.88</ecNumber>
    </recommendedName>
</protein>
<accession>A3NUV3</accession>
<reference key="1">
    <citation type="journal article" date="2010" name="Genome Biol. Evol.">
        <title>Continuing evolution of Burkholderia mallei through genome reduction and large-scale rearrangements.</title>
        <authorList>
            <person name="Losada L."/>
            <person name="Ronning C.M."/>
            <person name="DeShazer D."/>
            <person name="Woods D."/>
            <person name="Fedorova N."/>
            <person name="Kim H.S."/>
            <person name="Shabalina S.A."/>
            <person name="Pearson T.R."/>
            <person name="Brinkac L."/>
            <person name="Tan P."/>
            <person name="Nandi T."/>
            <person name="Crabtree J."/>
            <person name="Badger J."/>
            <person name="Beckstrom-Sternberg S."/>
            <person name="Saqib M."/>
            <person name="Schutzer S.E."/>
            <person name="Keim P."/>
            <person name="Nierman W.C."/>
        </authorList>
    </citation>
    <scope>NUCLEOTIDE SEQUENCE [LARGE SCALE GENOMIC DNA]</scope>
    <source>
        <strain>1106a</strain>
    </source>
</reference>
<keyword id="KW-0068">Autocatalytic cleavage</keyword>
<keyword id="KW-0227">DNA damage</keyword>
<keyword id="KW-0234">DNA repair</keyword>
<keyword id="KW-0235">DNA replication</keyword>
<keyword id="KW-0238">DNA-binding</keyword>
<keyword id="KW-0378">Hydrolase</keyword>
<keyword id="KW-0678">Repressor</keyword>
<keyword id="KW-0742">SOS response</keyword>
<keyword id="KW-0804">Transcription</keyword>
<keyword id="KW-0805">Transcription regulation</keyword>
<evidence type="ECO:0000255" key="1">
    <source>
        <dbReference type="HAMAP-Rule" id="MF_00015"/>
    </source>
</evidence>
<gene>
    <name evidence="1" type="primary">lexA</name>
    <name type="ordered locus">BURPS1106A_1859</name>
</gene>
<proteinExistence type="inferred from homology"/>
<organism>
    <name type="scientific">Burkholderia pseudomallei (strain 1106a)</name>
    <dbReference type="NCBI Taxonomy" id="357348"/>
    <lineage>
        <taxon>Bacteria</taxon>
        <taxon>Pseudomonadati</taxon>
        <taxon>Pseudomonadota</taxon>
        <taxon>Betaproteobacteria</taxon>
        <taxon>Burkholderiales</taxon>
        <taxon>Burkholderiaceae</taxon>
        <taxon>Burkholderia</taxon>
        <taxon>pseudomallei group</taxon>
    </lineage>
</organism>
<comment type="function">
    <text evidence="1">Represses a number of genes involved in the response to DNA damage (SOS response), including recA and lexA. In the presence of single-stranded DNA, RecA interacts with LexA causing an autocatalytic cleavage which disrupts the DNA-binding part of LexA, leading to derepression of the SOS regulon and eventually DNA repair.</text>
</comment>
<comment type="catalytic activity">
    <reaction evidence="1">
        <text>Hydrolysis of Ala-|-Gly bond in repressor LexA.</text>
        <dbReference type="EC" id="3.4.21.88"/>
    </reaction>
</comment>
<comment type="subunit">
    <text evidence="1">Homodimer.</text>
</comment>
<comment type="similarity">
    <text evidence="1">Belongs to the peptidase S24 family.</text>
</comment>
<name>LEXA_BURP0</name>
<dbReference type="EC" id="3.4.21.88" evidence="1"/>
<dbReference type="EMBL" id="CP000572">
    <property type="protein sequence ID" value="ABN92163.1"/>
    <property type="molecule type" value="Genomic_DNA"/>
</dbReference>
<dbReference type="RefSeq" id="WP_004191638.1">
    <property type="nucleotide sequence ID" value="NC_009076.1"/>
</dbReference>
<dbReference type="SMR" id="A3NUV3"/>
<dbReference type="MEROPS" id="S24.001"/>
<dbReference type="GeneID" id="93060159"/>
<dbReference type="KEGG" id="bpl:BURPS1106A_1859"/>
<dbReference type="HOGENOM" id="CLU_066192_45_3_4"/>
<dbReference type="Proteomes" id="UP000006738">
    <property type="component" value="Chromosome I"/>
</dbReference>
<dbReference type="GO" id="GO:0003677">
    <property type="term" value="F:DNA binding"/>
    <property type="evidence" value="ECO:0007669"/>
    <property type="project" value="UniProtKB-UniRule"/>
</dbReference>
<dbReference type="GO" id="GO:0004252">
    <property type="term" value="F:serine-type endopeptidase activity"/>
    <property type="evidence" value="ECO:0007669"/>
    <property type="project" value="UniProtKB-UniRule"/>
</dbReference>
<dbReference type="GO" id="GO:0006281">
    <property type="term" value="P:DNA repair"/>
    <property type="evidence" value="ECO:0007669"/>
    <property type="project" value="UniProtKB-UniRule"/>
</dbReference>
<dbReference type="GO" id="GO:0006260">
    <property type="term" value="P:DNA replication"/>
    <property type="evidence" value="ECO:0007669"/>
    <property type="project" value="UniProtKB-UniRule"/>
</dbReference>
<dbReference type="GO" id="GO:0045892">
    <property type="term" value="P:negative regulation of DNA-templated transcription"/>
    <property type="evidence" value="ECO:0007669"/>
    <property type="project" value="UniProtKB-UniRule"/>
</dbReference>
<dbReference type="GO" id="GO:0006508">
    <property type="term" value="P:proteolysis"/>
    <property type="evidence" value="ECO:0007669"/>
    <property type="project" value="InterPro"/>
</dbReference>
<dbReference type="GO" id="GO:0009432">
    <property type="term" value="P:SOS response"/>
    <property type="evidence" value="ECO:0007669"/>
    <property type="project" value="UniProtKB-UniRule"/>
</dbReference>
<dbReference type="CDD" id="cd06529">
    <property type="entry name" value="S24_LexA-like"/>
    <property type="match status" value="1"/>
</dbReference>
<dbReference type="FunFam" id="1.10.10.10:FF:000009">
    <property type="entry name" value="LexA repressor"/>
    <property type="match status" value="1"/>
</dbReference>
<dbReference type="FunFam" id="2.10.109.10:FF:000001">
    <property type="entry name" value="LexA repressor"/>
    <property type="match status" value="1"/>
</dbReference>
<dbReference type="Gene3D" id="2.10.109.10">
    <property type="entry name" value="Umud Fragment, subunit A"/>
    <property type="match status" value="1"/>
</dbReference>
<dbReference type="Gene3D" id="1.10.10.10">
    <property type="entry name" value="Winged helix-like DNA-binding domain superfamily/Winged helix DNA-binding domain"/>
    <property type="match status" value="1"/>
</dbReference>
<dbReference type="HAMAP" id="MF_00015">
    <property type="entry name" value="LexA"/>
    <property type="match status" value="1"/>
</dbReference>
<dbReference type="InterPro" id="IPR006200">
    <property type="entry name" value="LexA"/>
</dbReference>
<dbReference type="InterPro" id="IPR039418">
    <property type="entry name" value="LexA-like"/>
</dbReference>
<dbReference type="InterPro" id="IPR036286">
    <property type="entry name" value="LexA/Signal_pep-like_sf"/>
</dbReference>
<dbReference type="InterPro" id="IPR006199">
    <property type="entry name" value="LexA_DNA-bd_dom"/>
</dbReference>
<dbReference type="InterPro" id="IPR050077">
    <property type="entry name" value="LexA_repressor"/>
</dbReference>
<dbReference type="InterPro" id="IPR006197">
    <property type="entry name" value="Peptidase_S24_LexA"/>
</dbReference>
<dbReference type="InterPro" id="IPR015927">
    <property type="entry name" value="Peptidase_S24_S26A/B/C"/>
</dbReference>
<dbReference type="InterPro" id="IPR036388">
    <property type="entry name" value="WH-like_DNA-bd_sf"/>
</dbReference>
<dbReference type="InterPro" id="IPR036390">
    <property type="entry name" value="WH_DNA-bd_sf"/>
</dbReference>
<dbReference type="NCBIfam" id="TIGR00498">
    <property type="entry name" value="lexA"/>
    <property type="match status" value="1"/>
</dbReference>
<dbReference type="PANTHER" id="PTHR33516">
    <property type="entry name" value="LEXA REPRESSOR"/>
    <property type="match status" value="1"/>
</dbReference>
<dbReference type="PANTHER" id="PTHR33516:SF2">
    <property type="entry name" value="LEXA REPRESSOR-RELATED"/>
    <property type="match status" value="1"/>
</dbReference>
<dbReference type="Pfam" id="PF01726">
    <property type="entry name" value="LexA_DNA_bind"/>
    <property type="match status" value="1"/>
</dbReference>
<dbReference type="Pfam" id="PF00717">
    <property type="entry name" value="Peptidase_S24"/>
    <property type="match status" value="1"/>
</dbReference>
<dbReference type="PRINTS" id="PR00726">
    <property type="entry name" value="LEXASERPTASE"/>
</dbReference>
<dbReference type="SUPFAM" id="SSF51306">
    <property type="entry name" value="LexA/Signal peptidase"/>
    <property type="match status" value="1"/>
</dbReference>
<dbReference type="SUPFAM" id="SSF46785">
    <property type="entry name" value="Winged helix' DNA-binding domain"/>
    <property type="match status" value="1"/>
</dbReference>